<proteinExistence type="evidence at protein level"/>
<accession>Q5SZI1</accession>
<accession>B9EJB3</accession>
<accession>Q6ZSN5</accession>
<dbReference type="EMBL" id="AK127275">
    <property type="protein sequence ID" value="BAC86913.1"/>
    <property type="molecule type" value="mRNA"/>
</dbReference>
<dbReference type="EMBL" id="AL590103">
    <property type="status" value="NOT_ANNOTATED_CDS"/>
    <property type="molecule type" value="Genomic_DNA"/>
</dbReference>
<dbReference type="EMBL" id="CH471134">
    <property type="protein sequence ID" value="EAW94993.1"/>
    <property type="molecule type" value="Genomic_DNA"/>
</dbReference>
<dbReference type="EMBL" id="BC146860">
    <property type="protein sequence ID" value="AAI46861.1"/>
    <property type="molecule type" value="mRNA"/>
</dbReference>
<dbReference type="CCDS" id="CCDS30624.1"/>
<dbReference type="RefSeq" id="NP_001013715.2">
    <property type="nucleotide sequence ID" value="NM_001013693.3"/>
</dbReference>
<dbReference type="SMR" id="Q5SZI1"/>
<dbReference type="BioGRID" id="135281">
    <property type="interactions" value="2"/>
</dbReference>
<dbReference type="FunCoup" id="Q5SZI1">
    <property type="interactions" value="26"/>
</dbReference>
<dbReference type="STRING" id="9606.ENSP00000340988"/>
<dbReference type="GlyCosmos" id="Q5SZI1">
    <property type="glycosylation" value="1 site, No reported glycans"/>
</dbReference>
<dbReference type="GlyGen" id="Q5SZI1">
    <property type="glycosylation" value="1 site"/>
</dbReference>
<dbReference type="iPTMnet" id="Q5SZI1"/>
<dbReference type="PhosphoSitePlus" id="Q5SZI1"/>
<dbReference type="BioMuta" id="LDLRAD2"/>
<dbReference type="DMDM" id="74744157"/>
<dbReference type="jPOST" id="Q5SZI1"/>
<dbReference type="PaxDb" id="9606-ENSP00000340988"/>
<dbReference type="PeptideAtlas" id="Q5SZI1"/>
<dbReference type="ProteomicsDB" id="64065"/>
<dbReference type="Antibodypedia" id="30016">
    <property type="antibodies" value="128 antibodies from 24 providers"/>
</dbReference>
<dbReference type="DNASU" id="401944"/>
<dbReference type="Ensembl" id="ENST00000344642.7">
    <property type="protein sequence ID" value="ENSP00000340988.2"/>
    <property type="gene ID" value="ENSG00000187942.12"/>
</dbReference>
<dbReference type="Ensembl" id="ENST00000543870.1">
    <property type="protein sequence ID" value="ENSP00000444097.1"/>
    <property type="gene ID" value="ENSG00000187942.12"/>
</dbReference>
<dbReference type="GeneID" id="401944"/>
<dbReference type="KEGG" id="hsa:401944"/>
<dbReference type="MANE-Select" id="ENST00000344642.7">
    <property type="protein sequence ID" value="ENSP00000340988.2"/>
    <property type="RefSeq nucleotide sequence ID" value="NM_001013693.3"/>
    <property type="RefSeq protein sequence ID" value="NP_001013715.2"/>
</dbReference>
<dbReference type="UCSC" id="uc001bfg.1">
    <property type="organism name" value="human"/>
</dbReference>
<dbReference type="AGR" id="HGNC:32071"/>
<dbReference type="CTD" id="401944"/>
<dbReference type="DisGeNET" id="401944"/>
<dbReference type="GeneCards" id="LDLRAD2"/>
<dbReference type="HGNC" id="HGNC:32071">
    <property type="gene designation" value="LDLRAD2"/>
</dbReference>
<dbReference type="HPA" id="ENSG00000187942">
    <property type="expression patterns" value="Low tissue specificity"/>
</dbReference>
<dbReference type="MalaCards" id="LDLRAD2"/>
<dbReference type="neXtProt" id="NX_Q5SZI1"/>
<dbReference type="OpenTargets" id="ENSG00000187942"/>
<dbReference type="PharmGKB" id="PA142671555"/>
<dbReference type="VEuPathDB" id="HostDB:ENSG00000187942"/>
<dbReference type="eggNOG" id="ENOG502R5YQ">
    <property type="taxonomic scope" value="Eukaryota"/>
</dbReference>
<dbReference type="GeneTree" id="ENSGT00390000004581"/>
<dbReference type="HOGENOM" id="CLU_062033_1_0_1"/>
<dbReference type="InParanoid" id="Q5SZI1"/>
<dbReference type="OMA" id="GAYFRCR"/>
<dbReference type="OrthoDB" id="6514358at2759"/>
<dbReference type="PAN-GO" id="Q5SZI1">
    <property type="GO annotations" value="0 GO annotations based on evolutionary models"/>
</dbReference>
<dbReference type="PhylomeDB" id="Q5SZI1"/>
<dbReference type="TreeFam" id="TF333091"/>
<dbReference type="PathwayCommons" id="Q5SZI1"/>
<dbReference type="BioGRID-ORCS" id="401944">
    <property type="hits" value="12 hits in 1139 CRISPR screens"/>
</dbReference>
<dbReference type="ChiTaRS" id="LDLRAD2">
    <property type="organism name" value="human"/>
</dbReference>
<dbReference type="GenomeRNAi" id="401944"/>
<dbReference type="Pharos" id="Q5SZI1">
    <property type="development level" value="Tdark"/>
</dbReference>
<dbReference type="PRO" id="PR:Q5SZI1"/>
<dbReference type="Proteomes" id="UP000005640">
    <property type="component" value="Chromosome 1"/>
</dbReference>
<dbReference type="RNAct" id="Q5SZI1">
    <property type="molecule type" value="protein"/>
</dbReference>
<dbReference type="Bgee" id="ENSG00000187942">
    <property type="expression patterns" value="Expressed in sural nerve and 94 other cell types or tissues"/>
</dbReference>
<dbReference type="GO" id="GO:0016020">
    <property type="term" value="C:membrane"/>
    <property type="evidence" value="ECO:0007669"/>
    <property type="project" value="UniProtKB-SubCell"/>
</dbReference>
<dbReference type="CDD" id="cd00112">
    <property type="entry name" value="LDLa"/>
    <property type="match status" value="1"/>
</dbReference>
<dbReference type="Gene3D" id="4.10.400.10">
    <property type="entry name" value="Low-density Lipoprotein Receptor"/>
    <property type="match status" value="1"/>
</dbReference>
<dbReference type="Gene3D" id="2.60.120.290">
    <property type="entry name" value="Spermadhesin, CUB domain"/>
    <property type="match status" value="1"/>
</dbReference>
<dbReference type="InterPro" id="IPR036055">
    <property type="entry name" value="LDL_receptor-like_sf"/>
</dbReference>
<dbReference type="InterPro" id="IPR002172">
    <property type="entry name" value="LDrepeatLR_classA_rpt"/>
</dbReference>
<dbReference type="InterPro" id="IPR042333">
    <property type="entry name" value="LRAD2/Mig-13-like"/>
</dbReference>
<dbReference type="InterPro" id="IPR035914">
    <property type="entry name" value="Sperma_CUB_dom_sf"/>
</dbReference>
<dbReference type="PANTHER" id="PTHR24652">
    <property type="entry name" value="LOW-DENSITY LIPOPROTEIN RECEPTOR CLASS A DOMAIN-CONTAINING PROTEIN 2"/>
    <property type="match status" value="1"/>
</dbReference>
<dbReference type="PANTHER" id="PTHR24652:SF67">
    <property type="entry name" value="LOW-DENSITY LIPOPROTEIN RECEPTOR CLASS A DOMAIN-CONTAINING PROTEIN 2"/>
    <property type="match status" value="1"/>
</dbReference>
<dbReference type="Pfam" id="PF00057">
    <property type="entry name" value="Ldl_recept_a"/>
    <property type="match status" value="1"/>
</dbReference>
<dbReference type="SMART" id="SM00192">
    <property type="entry name" value="LDLa"/>
    <property type="match status" value="1"/>
</dbReference>
<dbReference type="SUPFAM" id="SSF57424">
    <property type="entry name" value="LDL receptor-like module"/>
    <property type="match status" value="1"/>
</dbReference>
<dbReference type="SUPFAM" id="SSF49854">
    <property type="entry name" value="Spermadhesin, CUB domain"/>
    <property type="match status" value="1"/>
</dbReference>
<dbReference type="PROSITE" id="PS50068">
    <property type="entry name" value="LDLRA_2"/>
    <property type="match status" value="1"/>
</dbReference>
<reference key="1">
    <citation type="journal article" date="2004" name="Nat. Genet.">
        <title>Complete sequencing and characterization of 21,243 full-length human cDNAs.</title>
        <authorList>
            <person name="Ota T."/>
            <person name="Suzuki Y."/>
            <person name="Nishikawa T."/>
            <person name="Otsuki T."/>
            <person name="Sugiyama T."/>
            <person name="Irie R."/>
            <person name="Wakamatsu A."/>
            <person name="Hayashi K."/>
            <person name="Sato H."/>
            <person name="Nagai K."/>
            <person name="Kimura K."/>
            <person name="Makita H."/>
            <person name="Sekine M."/>
            <person name="Obayashi M."/>
            <person name="Nishi T."/>
            <person name="Shibahara T."/>
            <person name="Tanaka T."/>
            <person name="Ishii S."/>
            <person name="Yamamoto J."/>
            <person name="Saito K."/>
            <person name="Kawai Y."/>
            <person name="Isono Y."/>
            <person name="Nakamura Y."/>
            <person name="Nagahari K."/>
            <person name="Murakami K."/>
            <person name="Yasuda T."/>
            <person name="Iwayanagi T."/>
            <person name="Wagatsuma M."/>
            <person name="Shiratori A."/>
            <person name="Sudo H."/>
            <person name="Hosoiri T."/>
            <person name="Kaku Y."/>
            <person name="Kodaira H."/>
            <person name="Kondo H."/>
            <person name="Sugawara M."/>
            <person name="Takahashi M."/>
            <person name="Kanda K."/>
            <person name="Yokoi T."/>
            <person name="Furuya T."/>
            <person name="Kikkawa E."/>
            <person name="Omura Y."/>
            <person name="Abe K."/>
            <person name="Kamihara K."/>
            <person name="Katsuta N."/>
            <person name="Sato K."/>
            <person name="Tanikawa M."/>
            <person name="Yamazaki M."/>
            <person name="Ninomiya K."/>
            <person name="Ishibashi T."/>
            <person name="Yamashita H."/>
            <person name="Murakawa K."/>
            <person name="Fujimori K."/>
            <person name="Tanai H."/>
            <person name="Kimata M."/>
            <person name="Watanabe M."/>
            <person name="Hiraoka S."/>
            <person name="Chiba Y."/>
            <person name="Ishida S."/>
            <person name="Ono Y."/>
            <person name="Takiguchi S."/>
            <person name="Watanabe S."/>
            <person name="Yosida M."/>
            <person name="Hotuta T."/>
            <person name="Kusano J."/>
            <person name="Kanehori K."/>
            <person name="Takahashi-Fujii A."/>
            <person name="Hara H."/>
            <person name="Tanase T.-O."/>
            <person name="Nomura Y."/>
            <person name="Togiya S."/>
            <person name="Komai F."/>
            <person name="Hara R."/>
            <person name="Takeuchi K."/>
            <person name="Arita M."/>
            <person name="Imose N."/>
            <person name="Musashino K."/>
            <person name="Yuuki H."/>
            <person name="Oshima A."/>
            <person name="Sasaki N."/>
            <person name="Aotsuka S."/>
            <person name="Yoshikawa Y."/>
            <person name="Matsunawa H."/>
            <person name="Ichihara T."/>
            <person name="Shiohata N."/>
            <person name="Sano S."/>
            <person name="Moriya S."/>
            <person name="Momiyama H."/>
            <person name="Satoh N."/>
            <person name="Takami S."/>
            <person name="Terashima Y."/>
            <person name="Suzuki O."/>
            <person name="Nakagawa S."/>
            <person name="Senoh A."/>
            <person name="Mizoguchi H."/>
            <person name="Goto Y."/>
            <person name="Shimizu F."/>
            <person name="Wakebe H."/>
            <person name="Hishigaki H."/>
            <person name="Watanabe T."/>
            <person name="Sugiyama A."/>
            <person name="Takemoto M."/>
            <person name="Kawakami B."/>
            <person name="Yamazaki M."/>
            <person name="Watanabe K."/>
            <person name="Kumagai A."/>
            <person name="Itakura S."/>
            <person name="Fukuzumi Y."/>
            <person name="Fujimori Y."/>
            <person name="Komiyama M."/>
            <person name="Tashiro H."/>
            <person name="Tanigami A."/>
            <person name="Fujiwara T."/>
            <person name="Ono T."/>
            <person name="Yamada K."/>
            <person name="Fujii Y."/>
            <person name="Ozaki K."/>
            <person name="Hirao M."/>
            <person name="Ohmori Y."/>
            <person name="Kawabata A."/>
            <person name="Hikiji T."/>
            <person name="Kobatake N."/>
            <person name="Inagaki H."/>
            <person name="Ikema Y."/>
            <person name="Okamoto S."/>
            <person name="Okitani R."/>
            <person name="Kawakami T."/>
            <person name="Noguchi S."/>
            <person name="Itoh T."/>
            <person name="Shigeta K."/>
            <person name="Senba T."/>
            <person name="Matsumura K."/>
            <person name="Nakajima Y."/>
            <person name="Mizuno T."/>
            <person name="Morinaga M."/>
            <person name="Sasaki M."/>
            <person name="Togashi T."/>
            <person name="Oyama M."/>
            <person name="Hata H."/>
            <person name="Watanabe M."/>
            <person name="Komatsu T."/>
            <person name="Mizushima-Sugano J."/>
            <person name="Satoh T."/>
            <person name="Shirai Y."/>
            <person name="Takahashi Y."/>
            <person name="Nakagawa K."/>
            <person name="Okumura K."/>
            <person name="Nagase T."/>
            <person name="Nomura N."/>
            <person name="Kikuchi H."/>
            <person name="Masuho Y."/>
            <person name="Yamashita R."/>
            <person name="Nakai K."/>
            <person name="Yada T."/>
            <person name="Nakamura Y."/>
            <person name="Ohara O."/>
            <person name="Isogai T."/>
            <person name="Sugano S."/>
        </authorList>
    </citation>
    <scope>NUCLEOTIDE SEQUENCE [LARGE SCALE MRNA]</scope>
    <source>
        <tissue>Hippocampus</tissue>
    </source>
</reference>
<reference key="2">
    <citation type="journal article" date="2006" name="Nature">
        <title>The DNA sequence and biological annotation of human chromosome 1.</title>
        <authorList>
            <person name="Gregory S.G."/>
            <person name="Barlow K.F."/>
            <person name="McLay K.E."/>
            <person name="Kaul R."/>
            <person name="Swarbreck D."/>
            <person name="Dunham A."/>
            <person name="Scott C.E."/>
            <person name="Howe K.L."/>
            <person name="Woodfine K."/>
            <person name="Spencer C.C.A."/>
            <person name="Jones M.C."/>
            <person name="Gillson C."/>
            <person name="Searle S."/>
            <person name="Zhou Y."/>
            <person name="Kokocinski F."/>
            <person name="McDonald L."/>
            <person name="Evans R."/>
            <person name="Phillips K."/>
            <person name="Atkinson A."/>
            <person name="Cooper R."/>
            <person name="Jones C."/>
            <person name="Hall R.E."/>
            <person name="Andrews T.D."/>
            <person name="Lloyd C."/>
            <person name="Ainscough R."/>
            <person name="Almeida J.P."/>
            <person name="Ambrose K.D."/>
            <person name="Anderson F."/>
            <person name="Andrew R.W."/>
            <person name="Ashwell R.I.S."/>
            <person name="Aubin K."/>
            <person name="Babbage A.K."/>
            <person name="Bagguley C.L."/>
            <person name="Bailey J."/>
            <person name="Beasley H."/>
            <person name="Bethel G."/>
            <person name="Bird C.P."/>
            <person name="Bray-Allen S."/>
            <person name="Brown J.Y."/>
            <person name="Brown A.J."/>
            <person name="Buckley D."/>
            <person name="Burton J."/>
            <person name="Bye J."/>
            <person name="Carder C."/>
            <person name="Chapman J.C."/>
            <person name="Clark S.Y."/>
            <person name="Clarke G."/>
            <person name="Clee C."/>
            <person name="Cobley V."/>
            <person name="Collier R.E."/>
            <person name="Corby N."/>
            <person name="Coville G.J."/>
            <person name="Davies J."/>
            <person name="Deadman R."/>
            <person name="Dunn M."/>
            <person name="Earthrowl M."/>
            <person name="Ellington A.G."/>
            <person name="Errington H."/>
            <person name="Frankish A."/>
            <person name="Frankland J."/>
            <person name="French L."/>
            <person name="Garner P."/>
            <person name="Garnett J."/>
            <person name="Gay L."/>
            <person name="Ghori M.R.J."/>
            <person name="Gibson R."/>
            <person name="Gilby L.M."/>
            <person name="Gillett W."/>
            <person name="Glithero R.J."/>
            <person name="Grafham D.V."/>
            <person name="Griffiths C."/>
            <person name="Griffiths-Jones S."/>
            <person name="Grocock R."/>
            <person name="Hammond S."/>
            <person name="Harrison E.S.I."/>
            <person name="Hart E."/>
            <person name="Haugen E."/>
            <person name="Heath P.D."/>
            <person name="Holmes S."/>
            <person name="Holt K."/>
            <person name="Howden P.J."/>
            <person name="Hunt A.R."/>
            <person name="Hunt S.E."/>
            <person name="Hunter G."/>
            <person name="Isherwood J."/>
            <person name="James R."/>
            <person name="Johnson C."/>
            <person name="Johnson D."/>
            <person name="Joy A."/>
            <person name="Kay M."/>
            <person name="Kershaw J.K."/>
            <person name="Kibukawa M."/>
            <person name="Kimberley A.M."/>
            <person name="King A."/>
            <person name="Knights A.J."/>
            <person name="Lad H."/>
            <person name="Laird G."/>
            <person name="Lawlor S."/>
            <person name="Leongamornlert D.A."/>
            <person name="Lloyd D.M."/>
            <person name="Loveland J."/>
            <person name="Lovell J."/>
            <person name="Lush M.J."/>
            <person name="Lyne R."/>
            <person name="Martin S."/>
            <person name="Mashreghi-Mohammadi M."/>
            <person name="Matthews L."/>
            <person name="Matthews N.S.W."/>
            <person name="McLaren S."/>
            <person name="Milne S."/>
            <person name="Mistry S."/>
            <person name="Moore M.J.F."/>
            <person name="Nickerson T."/>
            <person name="O'Dell C.N."/>
            <person name="Oliver K."/>
            <person name="Palmeiri A."/>
            <person name="Palmer S.A."/>
            <person name="Parker A."/>
            <person name="Patel D."/>
            <person name="Pearce A.V."/>
            <person name="Peck A.I."/>
            <person name="Pelan S."/>
            <person name="Phelps K."/>
            <person name="Phillimore B.J."/>
            <person name="Plumb R."/>
            <person name="Rajan J."/>
            <person name="Raymond C."/>
            <person name="Rouse G."/>
            <person name="Saenphimmachak C."/>
            <person name="Sehra H.K."/>
            <person name="Sheridan E."/>
            <person name="Shownkeen R."/>
            <person name="Sims S."/>
            <person name="Skuce C.D."/>
            <person name="Smith M."/>
            <person name="Steward C."/>
            <person name="Subramanian S."/>
            <person name="Sycamore N."/>
            <person name="Tracey A."/>
            <person name="Tromans A."/>
            <person name="Van Helmond Z."/>
            <person name="Wall M."/>
            <person name="Wallis J.M."/>
            <person name="White S."/>
            <person name="Whitehead S.L."/>
            <person name="Wilkinson J.E."/>
            <person name="Willey D.L."/>
            <person name="Williams H."/>
            <person name="Wilming L."/>
            <person name="Wray P.W."/>
            <person name="Wu Z."/>
            <person name="Coulson A."/>
            <person name="Vaudin M."/>
            <person name="Sulston J.E."/>
            <person name="Durbin R.M."/>
            <person name="Hubbard T."/>
            <person name="Wooster R."/>
            <person name="Dunham I."/>
            <person name="Carter N.P."/>
            <person name="McVean G."/>
            <person name="Ross M.T."/>
            <person name="Harrow J."/>
            <person name="Olson M.V."/>
            <person name="Beck S."/>
            <person name="Rogers J."/>
            <person name="Bentley D.R."/>
        </authorList>
    </citation>
    <scope>NUCLEOTIDE SEQUENCE [LARGE SCALE GENOMIC DNA]</scope>
</reference>
<reference key="3">
    <citation type="submission" date="2005-07" db="EMBL/GenBank/DDBJ databases">
        <authorList>
            <person name="Mural R.J."/>
            <person name="Istrail S."/>
            <person name="Sutton G.G."/>
            <person name="Florea L."/>
            <person name="Halpern A.L."/>
            <person name="Mobarry C.M."/>
            <person name="Lippert R."/>
            <person name="Walenz B."/>
            <person name="Shatkay H."/>
            <person name="Dew I."/>
            <person name="Miller J.R."/>
            <person name="Flanigan M.J."/>
            <person name="Edwards N.J."/>
            <person name="Bolanos R."/>
            <person name="Fasulo D."/>
            <person name="Halldorsson B.V."/>
            <person name="Hannenhalli S."/>
            <person name="Turner R."/>
            <person name="Yooseph S."/>
            <person name="Lu F."/>
            <person name="Nusskern D.R."/>
            <person name="Shue B.C."/>
            <person name="Zheng X.H."/>
            <person name="Zhong F."/>
            <person name="Delcher A.L."/>
            <person name="Huson D.H."/>
            <person name="Kravitz S.A."/>
            <person name="Mouchard L."/>
            <person name="Reinert K."/>
            <person name="Remington K.A."/>
            <person name="Clark A.G."/>
            <person name="Waterman M.S."/>
            <person name="Eichler E.E."/>
            <person name="Adams M.D."/>
            <person name="Hunkapiller M.W."/>
            <person name="Myers E.W."/>
            <person name="Venter J.C."/>
        </authorList>
    </citation>
    <scope>NUCLEOTIDE SEQUENCE [LARGE SCALE GENOMIC DNA]</scope>
</reference>
<reference key="4">
    <citation type="journal article" date="2004" name="Genome Res.">
        <title>The status, quality, and expansion of the NIH full-length cDNA project: the Mammalian Gene Collection (MGC).</title>
        <authorList>
            <consortium name="The MGC Project Team"/>
        </authorList>
    </citation>
    <scope>NUCLEOTIDE SEQUENCE [LARGE SCALE MRNA]</scope>
    <scope>VARIANT THR-134</scope>
</reference>
<feature type="signal peptide" evidence="1">
    <location>
        <begin position="1"/>
        <end position="25"/>
    </location>
</feature>
<feature type="chain" id="PRO_0000299377" description="Low-density lipoprotein receptor class A domain-containing protein 2">
    <location>
        <begin position="26"/>
        <end position="272"/>
    </location>
</feature>
<feature type="topological domain" description="Extracellular" evidence="1">
    <location>
        <begin position="26"/>
        <end position="233"/>
    </location>
</feature>
<feature type="transmembrane region" description="Helical" evidence="1">
    <location>
        <begin position="234"/>
        <end position="250"/>
    </location>
</feature>
<feature type="topological domain" description="Cytoplasmic" evidence="1">
    <location>
        <begin position="251"/>
        <end position="272"/>
    </location>
</feature>
<feature type="domain" description="LDL-receptor class A" evidence="2">
    <location>
        <begin position="172"/>
        <end position="214"/>
    </location>
</feature>
<feature type="region of interest" description="Disordered" evidence="3">
    <location>
        <begin position="202"/>
        <end position="272"/>
    </location>
</feature>
<feature type="compositionally biased region" description="Polar residues" evidence="3">
    <location>
        <begin position="220"/>
        <end position="236"/>
    </location>
</feature>
<feature type="glycosylation site" description="N-linked (GlcNAc...) asparagine" evidence="1">
    <location>
        <position position="97"/>
    </location>
</feature>
<feature type="disulfide bond" evidence="2">
    <location>
        <begin position="173"/>
        <end position="184"/>
    </location>
</feature>
<feature type="disulfide bond" evidence="2">
    <location>
        <begin position="179"/>
        <end position="199"/>
    </location>
</feature>
<feature type="disulfide bond" evidence="2">
    <location>
        <begin position="191"/>
        <end position="213"/>
    </location>
</feature>
<feature type="sequence variant" id="VAR_034812" description="In dbSNP:rs10917051." evidence="4">
    <original>N</original>
    <variation>T</variation>
    <location>
        <position position="134"/>
    </location>
</feature>
<feature type="sequence conflict" description="In Ref. 1; BAC86913." evidence="5" ref="1">
    <original>Q</original>
    <variation>R</variation>
    <location>
        <position position="114"/>
    </location>
</feature>
<name>LRAD2_HUMAN</name>
<organism>
    <name type="scientific">Homo sapiens</name>
    <name type="common">Human</name>
    <dbReference type="NCBI Taxonomy" id="9606"/>
    <lineage>
        <taxon>Eukaryota</taxon>
        <taxon>Metazoa</taxon>
        <taxon>Chordata</taxon>
        <taxon>Craniata</taxon>
        <taxon>Vertebrata</taxon>
        <taxon>Euteleostomi</taxon>
        <taxon>Mammalia</taxon>
        <taxon>Eutheria</taxon>
        <taxon>Euarchontoglires</taxon>
        <taxon>Primates</taxon>
        <taxon>Haplorrhini</taxon>
        <taxon>Catarrhini</taxon>
        <taxon>Hominidae</taxon>
        <taxon>Homo</taxon>
    </lineage>
</organism>
<comment type="subcellular location">
    <subcellularLocation>
        <location>Membrane</location>
        <topology>Single-pass type I membrane protein</topology>
    </subcellularLocation>
</comment>
<comment type="similarity">
    <text evidence="5">Belongs to the LDLR family.</text>
</comment>
<protein>
    <recommendedName>
        <fullName>Low-density lipoprotein receptor class A domain-containing protein 2</fullName>
    </recommendedName>
</protein>
<evidence type="ECO:0000255" key="1"/>
<evidence type="ECO:0000255" key="2">
    <source>
        <dbReference type="PROSITE-ProRule" id="PRU00124"/>
    </source>
</evidence>
<evidence type="ECO:0000256" key="3">
    <source>
        <dbReference type="SAM" id="MobiDB-lite"/>
    </source>
</evidence>
<evidence type="ECO:0000269" key="4">
    <source>
    </source>
</evidence>
<evidence type="ECO:0000305" key="5"/>
<keyword id="KW-1015">Disulfide bond</keyword>
<keyword id="KW-0325">Glycoprotein</keyword>
<keyword id="KW-0449">Lipoprotein</keyword>
<keyword id="KW-0472">Membrane</keyword>
<keyword id="KW-1267">Proteomics identification</keyword>
<keyword id="KW-0675">Receptor</keyword>
<keyword id="KW-1185">Reference proteome</keyword>
<keyword id="KW-0732">Signal</keyword>
<keyword id="KW-0812">Transmembrane</keyword>
<keyword id="KW-1133">Transmembrane helix</keyword>
<gene>
    <name type="primary">LDLRAD2</name>
</gene>
<sequence>MEACCLLQLPQRLLLLGAAALTATALETADLAELCGQTWQGDGLLLRSHAASRRFYFVAPDTDCGLWVQAAAPGDRIRFQFRFFLVYSLTPAPPALNTSSPAPADPCAPGSYLQFYEGPPGAPRPLGSPLCGLNIPVPVASSGPFLGLRLVTRGRQPRVDFVGEVTSFRLGPCGAYFRCQNGRCIPSSLVCDPWGMDNCGDGSDQGSWSPADCRGPSPVPSQTGSTDAHTSRSLTPSPALGSAGSLWIAAERSSPAGRDPTRQDAALEGSTE</sequence>